<comment type="function">
    <text evidence="1">Binds the 23S rRNA.</text>
</comment>
<comment type="cofactor">
    <cofactor evidence="1">
        <name>Zn(2+)</name>
        <dbReference type="ChEBI" id="CHEBI:29105"/>
    </cofactor>
    <text evidence="1">Binds 1 zinc ion per subunit.</text>
</comment>
<comment type="subunit">
    <text evidence="1">Part of the 50S ribosomal subunit.</text>
</comment>
<comment type="similarity">
    <text evidence="1">Belongs to the bacterial ribosomal protein bL31 family. Type A subfamily.</text>
</comment>
<gene>
    <name evidence="1" type="primary">rpmE</name>
    <name type="ordered locus">Ccur92_01990</name>
    <name type="ORF">CCV52592_0828</name>
</gene>
<evidence type="ECO:0000255" key="1">
    <source>
        <dbReference type="HAMAP-Rule" id="MF_00501"/>
    </source>
</evidence>
<evidence type="ECO:0000305" key="2"/>
<proteinExistence type="inferred from homology"/>
<reference key="1">
    <citation type="submission" date="2007-07" db="EMBL/GenBank/DDBJ databases">
        <title>Genome sequence of Campylobacter curvus 525.92 isolated from human feces.</title>
        <authorList>
            <person name="Fouts D.E."/>
            <person name="Mongodin E.F."/>
            <person name="Puiu D."/>
            <person name="Sebastian Y."/>
            <person name="Miller W.G."/>
            <person name="Mandrell R.E."/>
            <person name="Lastovica A.J."/>
            <person name="Nelson K.E."/>
        </authorList>
    </citation>
    <scope>NUCLEOTIDE SEQUENCE [LARGE SCALE GENOMIC DNA]</scope>
    <source>
        <strain>525.92</strain>
    </source>
</reference>
<name>RL31_CAMC5</name>
<organism>
    <name type="scientific">Campylobacter curvus (strain 525.92)</name>
    <dbReference type="NCBI Taxonomy" id="360105"/>
    <lineage>
        <taxon>Bacteria</taxon>
        <taxon>Pseudomonadati</taxon>
        <taxon>Campylobacterota</taxon>
        <taxon>Epsilonproteobacteria</taxon>
        <taxon>Campylobacterales</taxon>
        <taxon>Campylobacteraceae</taxon>
        <taxon>Campylobacter</taxon>
    </lineage>
</organism>
<accession>A7GWB1</accession>
<dbReference type="EMBL" id="CP000767">
    <property type="protein sequence ID" value="EAU01181.1"/>
    <property type="molecule type" value="Genomic_DNA"/>
</dbReference>
<dbReference type="RefSeq" id="WP_009649619.1">
    <property type="nucleotide sequence ID" value="NC_009715.2"/>
</dbReference>
<dbReference type="SMR" id="A7GWB1"/>
<dbReference type="STRING" id="360105.CCV52592_0828"/>
<dbReference type="GeneID" id="61001490"/>
<dbReference type="KEGG" id="ccv:CCV52592_0828"/>
<dbReference type="HOGENOM" id="CLU_114306_4_3_7"/>
<dbReference type="OrthoDB" id="9803251at2"/>
<dbReference type="Proteomes" id="UP000006380">
    <property type="component" value="Chromosome"/>
</dbReference>
<dbReference type="GO" id="GO:1990904">
    <property type="term" value="C:ribonucleoprotein complex"/>
    <property type="evidence" value="ECO:0007669"/>
    <property type="project" value="UniProtKB-KW"/>
</dbReference>
<dbReference type="GO" id="GO:0005840">
    <property type="term" value="C:ribosome"/>
    <property type="evidence" value="ECO:0007669"/>
    <property type="project" value="UniProtKB-KW"/>
</dbReference>
<dbReference type="GO" id="GO:0046872">
    <property type="term" value="F:metal ion binding"/>
    <property type="evidence" value="ECO:0007669"/>
    <property type="project" value="UniProtKB-KW"/>
</dbReference>
<dbReference type="GO" id="GO:0019843">
    <property type="term" value="F:rRNA binding"/>
    <property type="evidence" value="ECO:0007669"/>
    <property type="project" value="UniProtKB-KW"/>
</dbReference>
<dbReference type="GO" id="GO:0003735">
    <property type="term" value="F:structural constituent of ribosome"/>
    <property type="evidence" value="ECO:0007669"/>
    <property type="project" value="InterPro"/>
</dbReference>
<dbReference type="GO" id="GO:0006412">
    <property type="term" value="P:translation"/>
    <property type="evidence" value="ECO:0007669"/>
    <property type="project" value="UniProtKB-UniRule"/>
</dbReference>
<dbReference type="Gene3D" id="4.10.830.30">
    <property type="entry name" value="Ribosomal protein L31"/>
    <property type="match status" value="1"/>
</dbReference>
<dbReference type="HAMAP" id="MF_00501">
    <property type="entry name" value="Ribosomal_bL31_1"/>
    <property type="match status" value="1"/>
</dbReference>
<dbReference type="InterPro" id="IPR034704">
    <property type="entry name" value="Ribosomal_bL28/bL31-like_sf"/>
</dbReference>
<dbReference type="InterPro" id="IPR002150">
    <property type="entry name" value="Ribosomal_bL31"/>
</dbReference>
<dbReference type="InterPro" id="IPR027491">
    <property type="entry name" value="Ribosomal_bL31_A"/>
</dbReference>
<dbReference type="InterPro" id="IPR042105">
    <property type="entry name" value="Ribosomal_bL31_sf"/>
</dbReference>
<dbReference type="NCBIfam" id="TIGR00105">
    <property type="entry name" value="L31"/>
    <property type="match status" value="1"/>
</dbReference>
<dbReference type="NCBIfam" id="NF000612">
    <property type="entry name" value="PRK00019.1"/>
    <property type="match status" value="1"/>
</dbReference>
<dbReference type="NCBIfam" id="NF001809">
    <property type="entry name" value="PRK00528.1"/>
    <property type="match status" value="1"/>
</dbReference>
<dbReference type="PANTHER" id="PTHR33280">
    <property type="entry name" value="50S RIBOSOMAL PROTEIN L31, CHLOROPLASTIC"/>
    <property type="match status" value="1"/>
</dbReference>
<dbReference type="PANTHER" id="PTHR33280:SF6">
    <property type="entry name" value="LARGE RIBOSOMAL SUBUNIT PROTEIN BL31A"/>
    <property type="match status" value="1"/>
</dbReference>
<dbReference type="Pfam" id="PF01197">
    <property type="entry name" value="Ribosomal_L31"/>
    <property type="match status" value="1"/>
</dbReference>
<dbReference type="PRINTS" id="PR01249">
    <property type="entry name" value="RIBOSOMALL31"/>
</dbReference>
<dbReference type="SUPFAM" id="SSF143800">
    <property type="entry name" value="L28p-like"/>
    <property type="match status" value="1"/>
</dbReference>
<dbReference type="PROSITE" id="PS01143">
    <property type="entry name" value="RIBOSOMAL_L31"/>
    <property type="match status" value="1"/>
</dbReference>
<sequence length="66" mass="7519">MKKEIHPEYIDCTVTCACGNTFKTKSNKSEIKIDICDKCHPFFTGSEKIVDSAGRVEKFKKKYALN</sequence>
<keyword id="KW-0479">Metal-binding</keyword>
<keyword id="KW-1185">Reference proteome</keyword>
<keyword id="KW-0687">Ribonucleoprotein</keyword>
<keyword id="KW-0689">Ribosomal protein</keyword>
<keyword id="KW-0694">RNA-binding</keyword>
<keyword id="KW-0699">rRNA-binding</keyword>
<keyword id="KW-0862">Zinc</keyword>
<protein>
    <recommendedName>
        <fullName evidence="1">Large ribosomal subunit protein bL31</fullName>
    </recommendedName>
    <alternativeName>
        <fullName evidence="2">50S ribosomal protein L31</fullName>
    </alternativeName>
</protein>
<feature type="chain" id="PRO_1000126578" description="Large ribosomal subunit protein bL31">
    <location>
        <begin position="1"/>
        <end position="66"/>
    </location>
</feature>
<feature type="binding site" evidence="1">
    <location>
        <position position="16"/>
    </location>
    <ligand>
        <name>Zn(2+)</name>
        <dbReference type="ChEBI" id="CHEBI:29105"/>
    </ligand>
</feature>
<feature type="binding site" evidence="1">
    <location>
        <position position="18"/>
    </location>
    <ligand>
        <name>Zn(2+)</name>
        <dbReference type="ChEBI" id="CHEBI:29105"/>
    </ligand>
</feature>
<feature type="binding site" evidence="1">
    <location>
        <position position="36"/>
    </location>
    <ligand>
        <name>Zn(2+)</name>
        <dbReference type="ChEBI" id="CHEBI:29105"/>
    </ligand>
</feature>
<feature type="binding site" evidence="1">
    <location>
        <position position="39"/>
    </location>
    <ligand>
        <name>Zn(2+)</name>
        <dbReference type="ChEBI" id="CHEBI:29105"/>
    </ligand>
</feature>